<feature type="chain" id="PRO_0000189548" description="Protein FAM53C">
    <location>
        <begin position="1"/>
        <end position="392"/>
    </location>
</feature>
<feature type="region of interest" description="Disordered" evidence="2">
    <location>
        <begin position="77"/>
        <end position="120"/>
    </location>
</feature>
<feature type="region of interest" description="Disordered" evidence="2">
    <location>
        <begin position="141"/>
        <end position="167"/>
    </location>
</feature>
<feature type="region of interest" description="Disordered" evidence="2">
    <location>
        <begin position="203"/>
        <end position="303"/>
    </location>
</feature>
<feature type="region of interest" description="Disordered" evidence="2">
    <location>
        <begin position="340"/>
        <end position="364"/>
    </location>
</feature>
<feature type="compositionally biased region" description="Polar residues" evidence="2">
    <location>
        <begin position="83"/>
        <end position="93"/>
    </location>
</feature>
<feature type="compositionally biased region" description="Polar residues" evidence="2">
    <location>
        <begin position="203"/>
        <end position="215"/>
    </location>
</feature>
<feature type="compositionally biased region" description="Low complexity" evidence="2">
    <location>
        <begin position="241"/>
        <end position="256"/>
    </location>
</feature>
<feature type="compositionally biased region" description="Basic and acidic residues" evidence="2">
    <location>
        <begin position="278"/>
        <end position="303"/>
    </location>
</feature>
<feature type="modified residue" description="N-acetylmethionine" evidence="1">
    <location>
        <position position="1"/>
    </location>
</feature>
<feature type="modified residue" description="Phosphoserine" evidence="1">
    <location>
        <position position="122"/>
    </location>
</feature>
<feature type="modified residue" description="Phosphoserine" evidence="1">
    <location>
        <position position="162"/>
    </location>
</feature>
<feature type="modified residue" description="Phosphoserine" evidence="1">
    <location>
        <position position="232"/>
    </location>
</feature>
<feature type="modified residue" description="Phosphoserine" evidence="1">
    <location>
        <position position="234"/>
    </location>
</feature>
<feature type="modified residue" description="Phosphoserine" evidence="1">
    <location>
        <position position="255"/>
    </location>
</feature>
<feature type="modified residue" description="Phosphoserine" evidence="1">
    <location>
        <position position="273"/>
    </location>
</feature>
<feature type="modified residue" description="Phosphoserine" evidence="1">
    <location>
        <position position="299"/>
    </location>
</feature>
<name>FA53C_PONAB</name>
<evidence type="ECO:0000250" key="1">
    <source>
        <dbReference type="UniProtKB" id="Q9NYF3"/>
    </source>
</evidence>
<evidence type="ECO:0000256" key="2">
    <source>
        <dbReference type="SAM" id="MobiDB-lite"/>
    </source>
</evidence>
<evidence type="ECO:0000305" key="3"/>
<reference key="1">
    <citation type="submission" date="2004-11" db="EMBL/GenBank/DDBJ databases">
        <authorList>
            <consortium name="The German cDNA consortium"/>
        </authorList>
    </citation>
    <scope>NUCLEOTIDE SEQUENCE [LARGE SCALE MRNA]</scope>
    <source>
        <tissue>Kidney</tissue>
    </source>
</reference>
<gene>
    <name evidence="1" type="primary">FAM53C</name>
</gene>
<protein>
    <recommendedName>
        <fullName evidence="1">Protein FAM53C</fullName>
    </recommendedName>
</protein>
<comment type="similarity">
    <text evidence="3">Belongs to the FAM53 family.</text>
</comment>
<keyword id="KW-0007">Acetylation</keyword>
<keyword id="KW-0597">Phosphoprotein</keyword>
<keyword id="KW-1185">Reference proteome</keyword>
<dbReference type="EMBL" id="CR859940">
    <property type="protein sequence ID" value="CAH92095.1"/>
    <property type="molecule type" value="mRNA"/>
</dbReference>
<dbReference type="RefSeq" id="NP_001126222.1">
    <property type="nucleotide sequence ID" value="NM_001132750.1"/>
</dbReference>
<dbReference type="RefSeq" id="XP_009239354.1">
    <property type="nucleotide sequence ID" value="XM_009241079.1"/>
</dbReference>
<dbReference type="RefSeq" id="XP_054411059.1">
    <property type="nucleotide sequence ID" value="XM_054555084.2"/>
</dbReference>
<dbReference type="RefSeq" id="XP_054411060.1">
    <property type="nucleotide sequence ID" value="XM_054555085.2"/>
</dbReference>
<dbReference type="RefSeq" id="XP_054411061.1">
    <property type="nucleotide sequence ID" value="XM_054555086.2"/>
</dbReference>
<dbReference type="RefSeq" id="XP_054411062.1">
    <property type="nucleotide sequence ID" value="XM_054555087.2"/>
</dbReference>
<dbReference type="RefSeq" id="XP_054411063.1">
    <property type="nucleotide sequence ID" value="XM_054555088.2"/>
</dbReference>
<dbReference type="RefSeq" id="XP_054411064.1">
    <property type="nucleotide sequence ID" value="XM_054555089.2"/>
</dbReference>
<dbReference type="RefSeq" id="XP_054411065.1">
    <property type="nucleotide sequence ID" value="XM_054555090.2"/>
</dbReference>
<dbReference type="RefSeq" id="XP_054411066.1">
    <property type="nucleotide sequence ID" value="XM_054555091.2"/>
</dbReference>
<dbReference type="FunCoup" id="Q5R815">
    <property type="interactions" value="1566"/>
</dbReference>
<dbReference type="STRING" id="9601.ENSPPYP00000017695"/>
<dbReference type="Ensembl" id="ENSPPYT00000018407.3">
    <property type="protein sequence ID" value="ENSPPYP00000017695.2"/>
    <property type="gene ID" value="ENSPPYG00000015826.3"/>
</dbReference>
<dbReference type="GeneID" id="100173191"/>
<dbReference type="KEGG" id="pon:100173191"/>
<dbReference type="CTD" id="51307"/>
<dbReference type="eggNOG" id="ENOG502RW5C">
    <property type="taxonomic scope" value="Eukaryota"/>
</dbReference>
<dbReference type="GeneTree" id="ENSGT00530000063371"/>
<dbReference type="HOGENOM" id="CLU_054215_1_0_1"/>
<dbReference type="InParanoid" id="Q5R815"/>
<dbReference type="OrthoDB" id="10026856at2759"/>
<dbReference type="TreeFam" id="TF332095"/>
<dbReference type="Proteomes" id="UP000001595">
    <property type="component" value="Chromosome 5"/>
</dbReference>
<dbReference type="GO" id="GO:0005634">
    <property type="term" value="C:nucleus"/>
    <property type="evidence" value="ECO:0007669"/>
    <property type="project" value="TreeGrafter"/>
</dbReference>
<dbReference type="GO" id="GO:0006606">
    <property type="term" value="P:protein import into nucleus"/>
    <property type="evidence" value="ECO:0007669"/>
    <property type="project" value="TreeGrafter"/>
</dbReference>
<dbReference type="InterPro" id="IPR029356">
    <property type="entry name" value="FAM53"/>
</dbReference>
<dbReference type="PANTHER" id="PTHR28567">
    <property type="entry name" value="PROTEIN FAM53A-LIKE ISOFORM X1"/>
    <property type="match status" value="1"/>
</dbReference>
<dbReference type="PANTHER" id="PTHR28567:SF4">
    <property type="entry name" value="PROTEIN FAM53C"/>
    <property type="match status" value="1"/>
</dbReference>
<dbReference type="Pfam" id="PF15242">
    <property type="entry name" value="FAM53"/>
    <property type="match status" value="1"/>
</dbReference>
<accession>Q5R815</accession>
<proteinExistence type="evidence at transcript level"/>
<organism>
    <name type="scientific">Pongo abelii</name>
    <name type="common">Sumatran orangutan</name>
    <name type="synonym">Pongo pygmaeus abelii</name>
    <dbReference type="NCBI Taxonomy" id="9601"/>
    <lineage>
        <taxon>Eukaryota</taxon>
        <taxon>Metazoa</taxon>
        <taxon>Chordata</taxon>
        <taxon>Craniata</taxon>
        <taxon>Vertebrata</taxon>
        <taxon>Euteleostomi</taxon>
        <taxon>Mammalia</taxon>
        <taxon>Eutheria</taxon>
        <taxon>Euarchontoglires</taxon>
        <taxon>Primates</taxon>
        <taxon>Haplorrhini</taxon>
        <taxon>Catarrhini</taxon>
        <taxon>Hominidae</taxon>
        <taxon>Pongo</taxon>
    </lineage>
</organism>
<sequence>MITLITEQLQKQTLDELKCTRFSISLPLPDHADISNCGNPFQLVSEGASWRGLPHCSCAEFQDSLNFSYHPSGLSLHLRPPSRGSSPKEQPLSQVLRPEPPDPEKLPVPPAPPSKRHCRSLSVPVDLSRWQPVWRPAPSKLWTPIKHRGSGGGGGPQVPHQSPPKRVSSLRFLQAPSASSQCAPAHRPYSPPFFSLALAQDSSRPCATSPQSGSWESDAESLSPCPPQRRFSLSPSLGPQASRFLPSARSSPASSPELPWRPRGLRNLPRSRSQPCDLDARKTGVKRRHEEDPRRLRPSLDFDKMNQKPYSGGLCLQETAREGSSISPPWFMACSPPPLSASCSPTGGSSQVLSESEEEEEGAVRWGRQALSKRTLCQQDFGDLDLNLIEEN</sequence>